<proteinExistence type="evidence at transcript level"/>
<accession>D2Y494</accession>
<name>U63B_CONCL</name>
<protein>
    <recommendedName>
        <fullName evidence="2">Conotoxin Cal6.3b</fullName>
    </recommendedName>
</protein>
<reference key="1">
    <citation type="journal article" date="2011" name="Toxicon">
        <title>Diversity of conotoxin types from Conus californicus reflects a diversity of prey types and a novel evolutionary history.</title>
        <authorList>
            <person name="Elliger C.A."/>
            <person name="Richmond T.A."/>
            <person name="Lebaric Z.N."/>
            <person name="Pierce N.T."/>
            <person name="Sweedler J.V."/>
            <person name="Gilly W.F."/>
        </authorList>
    </citation>
    <scope>NUCLEOTIDE SEQUENCE [MRNA]</scope>
    <source>
        <tissue>Venom duct</tissue>
    </source>
</reference>
<dbReference type="EMBL" id="GU306158">
    <property type="protein sequence ID" value="ADB04237.1"/>
    <property type="molecule type" value="mRNA"/>
</dbReference>
<dbReference type="ConoServer" id="3968">
    <property type="toxin name" value="Cal6.3b precursor"/>
</dbReference>
<dbReference type="GO" id="GO:0005576">
    <property type="term" value="C:extracellular region"/>
    <property type="evidence" value="ECO:0007669"/>
    <property type="project" value="UniProtKB-SubCell"/>
</dbReference>
<dbReference type="GO" id="GO:0099106">
    <property type="term" value="F:ion channel regulator activity"/>
    <property type="evidence" value="ECO:0007669"/>
    <property type="project" value="UniProtKB-KW"/>
</dbReference>
<dbReference type="GO" id="GO:0090729">
    <property type="term" value="F:toxin activity"/>
    <property type="evidence" value="ECO:0007669"/>
    <property type="project" value="UniProtKB-KW"/>
</dbReference>
<feature type="propeptide" id="PRO_0000417989" evidence="4">
    <location>
        <begin position="1" status="less than"/>
        <end position="4"/>
    </location>
</feature>
<feature type="peptide" id="PRO_5000566315" description="Conotoxin Cal6.3b" evidence="4">
    <location>
        <begin position="5"/>
        <end position="50"/>
    </location>
</feature>
<feature type="modified residue" description="Glutamine amide" evidence="1">
    <location>
        <position position="50"/>
    </location>
</feature>
<feature type="disulfide bond" evidence="1">
    <location>
        <begin position="12"/>
        <end position="23"/>
    </location>
</feature>
<feature type="disulfide bond" evidence="1">
    <location>
        <begin position="15"/>
        <end position="27"/>
    </location>
</feature>
<feature type="disulfide bond" evidence="1">
    <location>
        <begin position="22"/>
        <end position="30"/>
    </location>
</feature>
<feature type="non-terminal residue">
    <location>
        <position position="1"/>
    </location>
</feature>
<sequence>KKKRGWDTPAPCHYCQWKGPQCCVYYCSSCNYEEAREEGHYVSSHLLERQGR</sequence>
<comment type="function">
    <text evidence="3">Probable neurotoxin with unknown target. Possibly targets ion channels.</text>
</comment>
<comment type="subcellular location">
    <subcellularLocation>
        <location evidence="4">Secreted</location>
    </subcellularLocation>
</comment>
<comment type="tissue specificity">
    <text evidence="4">Expressed by the venom duct.</text>
</comment>
<comment type="domain">
    <text evidence="1">The presence of a 'disulfide through disulfide knot' structurally defines this protein as a knottin.</text>
</comment>
<comment type="domain">
    <text>The cysteine framework is VI/VII (C-C-CC-C-C).</text>
</comment>
<organism>
    <name type="scientific">Californiconus californicus</name>
    <name type="common">California cone</name>
    <name type="synonym">Conus californicus</name>
    <dbReference type="NCBI Taxonomy" id="1736779"/>
    <lineage>
        <taxon>Eukaryota</taxon>
        <taxon>Metazoa</taxon>
        <taxon>Spiralia</taxon>
        <taxon>Lophotrochozoa</taxon>
        <taxon>Mollusca</taxon>
        <taxon>Gastropoda</taxon>
        <taxon>Caenogastropoda</taxon>
        <taxon>Neogastropoda</taxon>
        <taxon>Conoidea</taxon>
        <taxon>Conidae</taxon>
        <taxon>Californiconus</taxon>
    </lineage>
</organism>
<keyword id="KW-0027">Amidation</keyword>
<keyword id="KW-0165">Cleavage on pair of basic residues</keyword>
<keyword id="KW-1015">Disulfide bond</keyword>
<keyword id="KW-0872">Ion channel impairing toxin</keyword>
<keyword id="KW-0960">Knottin</keyword>
<keyword id="KW-0528">Neurotoxin</keyword>
<keyword id="KW-0964">Secreted</keyword>
<keyword id="KW-0800">Toxin</keyword>
<evidence type="ECO:0000250" key="1"/>
<evidence type="ECO:0000303" key="2">
    <source>
    </source>
</evidence>
<evidence type="ECO:0000305" key="3"/>
<evidence type="ECO:0000305" key="4">
    <source>
    </source>
</evidence>